<accession>D3ZEH5</accession>
<accession>D3ZSU1</accession>
<protein>
    <recommendedName>
        <fullName>SID1 transmembrane family member 2</fullName>
    </recommendedName>
</protein>
<keyword id="KW-1003">Cell membrane</keyword>
<keyword id="KW-0238">DNA-binding</keyword>
<keyword id="KW-0325">Glycoprotein</keyword>
<keyword id="KW-0458">Lysosome</keyword>
<keyword id="KW-0472">Membrane</keyword>
<keyword id="KW-0597">Phosphoprotein</keyword>
<keyword id="KW-1185">Reference proteome</keyword>
<keyword id="KW-0694">RNA-binding</keyword>
<keyword id="KW-0732">Signal</keyword>
<keyword id="KW-0812">Transmembrane</keyword>
<keyword id="KW-1133">Transmembrane helix</keyword>
<keyword id="KW-0813">Transport</keyword>
<name>SIDT2_RAT</name>
<evidence type="ECO:0000250" key="1">
    <source>
        <dbReference type="UniProtKB" id="Q8CIF6"/>
    </source>
</evidence>
<evidence type="ECO:0000250" key="2">
    <source>
        <dbReference type="UniProtKB" id="Q8NBJ9"/>
    </source>
</evidence>
<evidence type="ECO:0000255" key="3"/>
<evidence type="ECO:0000269" key="4">
    <source>
    </source>
</evidence>
<evidence type="ECO:0000305" key="5"/>
<sequence length="832" mass="94527">MIAWRLPLCVLLVAAVESHLGALGPKNVSQKDAEFERTYADDVNSELVNIYTFNHTVTRNRTEGVRVSVNVLNKQKGAPLLFVVRQKEAVVSFQVPLILRGLYQRKYLYQKVERTLCQPPTKNESEIQFFYVDVSTLSPVNTTYQLRVNRVDNFVLRTGELFTFNTTAAQPQYFKYEFPDGVDSVIVKVTSKKAFPCSVISIQDVLCPVYDLDNNVAFIGMYQTMTKKAAITVQRKDFPSNSFYVVVVVKTEDQACGGSLPFYPFVEDEPVDQGHRQKTLSVLVSQAVTSEAYVGGMLFCLGIFLSFYLLTVLLACWENWRQRKKTLLVAIDRACPESGHPRVLADSFPGSAPYEGYNYGSFENGSGSTDGLVESTGSGDLSYSYQDRSFDPVGARPRLDSMSSVEEDDYDTLTDIDSDKNVIRTKQYLCVADLARKDKRVLRKKYQIYFWNIATIAVFYALPVVQLVITYQTVVNVTGNQDICYYNFLCAHPLGNLSAFNNILSNLGYILLGLLFLLIILQREINHNRALLRNDLYALECGIPKHFGLFYAMGTALMMEGLLSACYHVCPNYTNFQFDTSFMYMIAGLCMLKLYQKRHPDINASAYSAYACLAIVIFFSVLGVVFGKGNTAFWIVFSVIHIISTLLLSTQLYYMGRWKLDSGIFRRILHVLYTDCIRQCSGPLYTDRMVLLVMGNIINWSLAAYGLIMRPNDFASYLLAIGICNLLLYFAFYIIMKLRSGERIKLIPLLCIVCTSVVWGFALFFFFQGLSTWQKTPAESREHNRDCILLDFFDDHDIWHFLSSIAMFGSFLVLLTLDDDLDTVQRDKIYVF</sequence>
<gene>
    <name type="primary">Sidt2</name>
</gene>
<dbReference type="EMBL" id="AC096909">
    <property type="status" value="NOT_ANNOTATED_CDS"/>
    <property type="molecule type" value="Genomic_DNA"/>
</dbReference>
<dbReference type="EMBL" id="CH473975">
    <property type="protein sequence ID" value="EDL95388.1"/>
    <property type="status" value="ALT_SEQ"/>
    <property type="molecule type" value="Genomic_DNA"/>
</dbReference>
<dbReference type="RefSeq" id="NP_001101612.1">
    <property type="nucleotide sequence ID" value="NM_001108142.1"/>
</dbReference>
<dbReference type="RefSeq" id="NP_001416599.1">
    <property type="nucleotide sequence ID" value="NM_001429670.1"/>
</dbReference>
<dbReference type="SMR" id="D3ZEH5"/>
<dbReference type="FunCoup" id="D3ZEH5">
    <property type="interactions" value="772"/>
</dbReference>
<dbReference type="STRING" id="10116.ENSRNOP00000024239"/>
<dbReference type="GlyCosmos" id="D3ZEH5">
    <property type="glycosylation" value="10 sites, No reported glycans"/>
</dbReference>
<dbReference type="GlyGen" id="D3ZEH5">
    <property type="glycosylation" value="10 sites"/>
</dbReference>
<dbReference type="iPTMnet" id="D3ZEH5"/>
<dbReference type="PhosphoSitePlus" id="D3ZEH5"/>
<dbReference type="SwissPalm" id="D3ZEH5"/>
<dbReference type="PaxDb" id="10116-ENSRNOP00000024239"/>
<dbReference type="PeptideAtlas" id="D3ZEH5"/>
<dbReference type="GeneID" id="315617"/>
<dbReference type="KEGG" id="rno:315617"/>
<dbReference type="AGR" id="RGD:1308311"/>
<dbReference type="CTD" id="51092"/>
<dbReference type="RGD" id="1308311">
    <property type="gene designation" value="Sidt2"/>
</dbReference>
<dbReference type="VEuPathDB" id="HostDB:ENSRNOG00000017871"/>
<dbReference type="eggNOG" id="ENOG502QUXZ">
    <property type="taxonomic scope" value="Eukaryota"/>
</dbReference>
<dbReference type="HOGENOM" id="CLU_357018_0_0_1"/>
<dbReference type="InParanoid" id="D3ZEH5"/>
<dbReference type="OrthoDB" id="416618at2759"/>
<dbReference type="PhylomeDB" id="D3ZEH5"/>
<dbReference type="TreeFam" id="TF313076"/>
<dbReference type="PRO" id="PR:D3ZEH5"/>
<dbReference type="Proteomes" id="UP000002494">
    <property type="component" value="Chromosome 8"/>
</dbReference>
<dbReference type="Proteomes" id="UP000234681">
    <property type="component" value="Chromosome 8"/>
</dbReference>
<dbReference type="Bgee" id="ENSRNOG00000017871">
    <property type="expression patterns" value="Expressed in liver and 19 other cell types or tissues"/>
</dbReference>
<dbReference type="ExpressionAtlas" id="D3ZEH5">
    <property type="expression patterns" value="baseline and differential"/>
</dbReference>
<dbReference type="GO" id="GO:0005765">
    <property type="term" value="C:lysosomal membrane"/>
    <property type="evidence" value="ECO:0000250"/>
    <property type="project" value="UniProtKB"/>
</dbReference>
<dbReference type="GO" id="GO:0005764">
    <property type="term" value="C:lysosome"/>
    <property type="evidence" value="ECO:0000250"/>
    <property type="project" value="UniProtKB"/>
</dbReference>
<dbReference type="GO" id="GO:0005886">
    <property type="term" value="C:plasma membrane"/>
    <property type="evidence" value="ECO:0000250"/>
    <property type="project" value="UniProtKB"/>
</dbReference>
<dbReference type="GO" id="GO:0035650">
    <property type="term" value="F:AP-1 adaptor complex binding"/>
    <property type="evidence" value="ECO:0000250"/>
    <property type="project" value="UniProtKB"/>
</dbReference>
<dbReference type="GO" id="GO:0035612">
    <property type="term" value="F:AP-2 adaptor complex binding"/>
    <property type="evidence" value="ECO:0000250"/>
    <property type="project" value="UniProtKB"/>
</dbReference>
<dbReference type="GO" id="GO:0003677">
    <property type="term" value="F:DNA binding"/>
    <property type="evidence" value="ECO:0007669"/>
    <property type="project" value="UniProtKB-KW"/>
</dbReference>
<dbReference type="GO" id="GO:0003725">
    <property type="term" value="F:double-stranded RNA binding"/>
    <property type="evidence" value="ECO:0000266"/>
    <property type="project" value="RGD"/>
</dbReference>
<dbReference type="GO" id="GO:0051032">
    <property type="term" value="F:nucleic acid transmembrane transporter activity"/>
    <property type="evidence" value="ECO:0000250"/>
    <property type="project" value="UniProtKB"/>
</dbReference>
<dbReference type="GO" id="GO:0051033">
    <property type="term" value="F:RNA transmembrane transporter activity"/>
    <property type="evidence" value="ECO:0000318"/>
    <property type="project" value="GO_Central"/>
</dbReference>
<dbReference type="GO" id="GO:0000902">
    <property type="term" value="P:cell morphogenesis"/>
    <property type="evidence" value="ECO:0000266"/>
    <property type="project" value="RGD"/>
</dbReference>
<dbReference type="GO" id="GO:0042593">
    <property type="term" value="P:glucose homeostasis"/>
    <property type="evidence" value="ECO:0000266"/>
    <property type="project" value="RGD"/>
</dbReference>
<dbReference type="GO" id="GO:0061178">
    <property type="term" value="P:regulation of insulin secretion involved in cellular response to glucose stimulus"/>
    <property type="evidence" value="ECO:0000266"/>
    <property type="project" value="RGD"/>
</dbReference>
<dbReference type="GO" id="GO:0009749">
    <property type="term" value="P:response to glucose"/>
    <property type="evidence" value="ECO:0000266"/>
    <property type="project" value="RGD"/>
</dbReference>
<dbReference type="GO" id="GO:0006401">
    <property type="term" value="P:RNA catabolic process"/>
    <property type="evidence" value="ECO:0000250"/>
    <property type="project" value="UniProtKB"/>
</dbReference>
<dbReference type="GO" id="GO:0050658">
    <property type="term" value="P:RNA transport"/>
    <property type="evidence" value="ECO:0000250"/>
    <property type="project" value="UniProtKB"/>
</dbReference>
<dbReference type="GO" id="GO:0003323">
    <property type="term" value="P:type B pancreatic cell development"/>
    <property type="evidence" value="ECO:0000266"/>
    <property type="project" value="RGD"/>
</dbReference>
<dbReference type="GO" id="GO:0044342">
    <property type="term" value="P:type B pancreatic cell proliferation"/>
    <property type="evidence" value="ECO:0000266"/>
    <property type="project" value="RGD"/>
</dbReference>
<dbReference type="InterPro" id="IPR025958">
    <property type="entry name" value="SID1_TM_fam"/>
</dbReference>
<dbReference type="PANTHER" id="PTHR12185:SF16">
    <property type="entry name" value="SID1 TRANSMEMBRANE FAMILY MEMBER 2"/>
    <property type="match status" value="1"/>
</dbReference>
<dbReference type="PANTHER" id="PTHR12185">
    <property type="entry name" value="SID1 TRANSMEMBRANE FAMILY MEMEBER"/>
    <property type="match status" value="1"/>
</dbReference>
<dbReference type="Pfam" id="PF13965">
    <property type="entry name" value="SID-1_RNA_chan"/>
    <property type="match status" value="1"/>
</dbReference>
<feature type="signal peptide" evidence="3">
    <location>
        <begin position="1"/>
        <end position="15"/>
    </location>
</feature>
<feature type="chain" id="PRO_0000404154" description="SID1 transmembrane family member 2">
    <location>
        <begin position="16"/>
        <end position="832"/>
    </location>
</feature>
<feature type="topological domain" description="Extracellular" evidence="3">
    <location>
        <begin position="16"/>
        <end position="293"/>
    </location>
</feature>
<feature type="transmembrane region" description="Helical" evidence="3">
    <location>
        <begin position="294"/>
        <end position="314"/>
    </location>
</feature>
<feature type="topological domain" description="Cytoplasmic" evidence="3">
    <location>
        <begin position="315"/>
        <end position="447"/>
    </location>
</feature>
<feature type="transmembrane region" description="Helical" evidence="3">
    <location>
        <begin position="448"/>
        <end position="468"/>
    </location>
</feature>
<feature type="topological domain" description="Extracellular" evidence="3">
    <location>
        <begin position="469"/>
        <end position="499"/>
    </location>
</feature>
<feature type="transmembrane region" description="Helical" evidence="3">
    <location>
        <begin position="500"/>
        <end position="520"/>
    </location>
</feature>
<feature type="topological domain" description="Cytoplasmic" evidence="3">
    <location>
        <begin position="521"/>
        <end position="546"/>
    </location>
</feature>
<feature type="transmembrane region" description="Helical" evidence="3">
    <location>
        <begin position="547"/>
        <end position="567"/>
    </location>
</feature>
<feature type="topological domain" description="Extracellular" evidence="3">
    <location>
        <begin position="568"/>
        <end position="605"/>
    </location>
</feature>
<feature type="transmembrane region" description="Helical" evidence="3">
    <location>
        <begin position="606"/>
        <end position="626"/>
    </location>
</feature>
<feature type="topological domain" description="Cytoplasmic" evidence="3">
    <location>
        <begin position="627"/>
        <end position="631"/>
    </location>
</feature>
<feature type="transmembrane region" description="Helical" evidence="3">
    <location>
        <begin position="632"/>
        <end position="652"/>
    </location>
</feature>
<feature type="topological domain" description="Extracellular" evidence="3">
    <location>
        <begin position="653"/>
        <end position="688"/>
    </location>
</feature>
<feature type="transmembrane region" description="Helical" evidence="3">
    <location>
        <begin position="689"/>
        <end position="709"/>
    </location>
</feature>
<feature type="topological domain" description="Cytoplasmic" evidence="3">
    <location>
        <begin position="710"/>
        <end position="715"/>
    </location>
</feature>
<feature type="transmembrane region" description="Helical" evidence="3">
    <location>
        <begin position="716"/>
        <end position="736"/>
    </location>
</feature>
<feature type="topological domain" description="Extracellular" evidence="3">
    <location>
        <begin position="737"/>
        <end position="746"/>
    </location>
</feature>
<feature type="transmembrane region" description="Helical" evidence="3">
    <location>
        <begin position="747"/>
        <end position="767"/>
    </location>
</feature>
<feature type="topological domain" description="Cytoplasmic" evidence="3">
    <location>
        <begin position="768"/>
        <end position="796"/>
    </location>
</feature>
<feature type="transmembrane region" description="Helical" evidence="3">
    <location>
        <begin position="797"/>
        <end position="817"/>
    </location>
</feature>
<feature type="topological domain" description="Extracellular" evidence="3">
    <location>
        <begin position="818"/>
        <end position="832"/>
    </location>
</feature>
<feature type="modified residue" description="Phosphoserine" evidence="2">
    <location>
        <position position="401"/>
    </location>
</feature>
<feature type="modified residue" description="Phosphoserine" evidence="2">
    <location>
        <position position="403"/>
    </location>
</feature>
<feature type="modified residue" description="Phosphoserine" evidence="2">
    <location>
        <position position="404"/>
    </location>
</feature>
<feature type="glycosylation site" description="N-linked (GlcNAc...) asparagine" evidence="3">
    <location>
        <position position="27"/>
    </location>
</feature>
<feature type="glycosylation site" description="N-linked (GlcNAc...) asparagine" evidence="3">
    <location>
        <position position="54"/>
    </location>
</feature>
<feature type="glycosylation site" description="N-linked (GlcNAc...) asparagine" evidence="3">
    <location>
        <position position="60"/>
    </location>
</feature>
<feature type="glycosylation site" description="N-linked (GlcNAc...) asparagine" evidence="3">
    <location>
        <position position="123"/>
    </location>
</feature>
<feature type="glycosylation site" description="N-linked (GlcNAc...) asparagine" evidence="3">
    <location>
        <position position="141"/>
    </location>
</feature>
<feature type="glycosylation site" description="N-linked (GlcNAc...) asparagine" evidence="3">
    <location>
        <position position="165"/>
    </location>
</feature>
<feature type="glycosylation site" description="N-linked (GlcNAc...) asparagine" evidence="3">
    <location>
        <position position="476"/>
    </location>
</feature>
<feature type="glycosylation site" description="N-linked (GlcNAc...) asparagine" evidence="3">
    <location>
        <position position="496"/>
    </location>
</feature>
<feature type="glycosylation site" description="N-linked (GlcNAc...) asparagine" evidence="3">
    <location>
        <position position="572"/>
    </location>
</feature>
<feature type="glycosylation site" description="N-linked (GlcNAc...) asparagine" evidence="3">
    <location>
        <position position="603"/>
    </location>
</feature>
<comment type="function">
    <text evidence="1 2">Mediates the translocation of RNA and DNA across the lysosomal membrane during RNA and DNA autophagy (RDA), a process in which RNA or DNA is directly imported into lysosomes in an ATP-dependent manner, and degraded. Involved in the uptake of single-stranded oligonucleotides by living cells, a process called gymnosis (By similarity). In vitro, mediates the uptake of linear DNA more efficiently than that of circular DNA, but exhibits similar uptake efficacy toward RNA and DNA. Binds long double-stranded RNA (dsRNA) (500 - 700 base pairs), but not dsRNA shorter than 100 bp (By similarity).</text>
</comment>
<comment type="subunit">
    <text evidence="1 2">Interacts with adapter protein complex 1 (AP-1) and AP-2, but not AP-3 and AP-4 (By similarity). Interacts with LAMP2 (By similarity).</text>
</comment>
<comment type="subcellular location">
    <subcellularLocation>
        <location evidence="2">Lysosome membrane</location>
        <topology evidence="2">Multi-pass membrane protein</topology>
    </subcellularLocation>
    <subcellularLocation>
        <location evidence="2">Cell membrane</location>
    </subcellularLocation>
    <text evidence="1 2">Mainly localizes to lysosomes and only partly to the plasma membrane (By similarity). Lysosomal localization is required for SIDT2-mediated intracellular degradation of endogenous RNA (By similarity).</text>
</comment>
<comment type="tissue specificity">
    <text evidence="4">Highly expressed in the liver, brain, kidney and intestine (at protein level).</text>
</comment>
<comment type="PTM">
    <text evidence="4">Glycosylated.</text>
</comment>
<comment type="similarity">
    <text evidence="5">Belongs to the SID1 family.</text>
</comment>
<comment type="sequence caution" evidence="5">
    <conflict type="erroneous gene model prediction">
        <sequence resource="EMBL-CDS" id="EDL95388"/>
    </conflict>
</comment>
<proteinExistence type="evidence at protein level"/>
<reference key="1">
    <citation type="journal article" date="2004" name="Nature">
        <title>Genome sequence of the Brown Norway rat yields insights into mammalian evolution.</title>
        <authorList>
            <person name="Gibbs R.A."/>
            <person name="Weinstock G.M."/>
            <person name="Metzker M.L."/>
            <person name="Muzny D.M."/>
            <person name="Sodergren E.J."/>
            <person name="Scherer S."/>
            <person name="Scott G."/>
            <person name="Steffen D."/>
            <person name="Worley K.C."/>
            <person name="Burch P.E."/>
            <person name="Okwuonu G."/>
            <person name="Hines S."/>
            <person name="Lewis L."/>
            <person name="Deramo C."/>
            <person name="Delgado O."/>
            <person name="Dugan-Rocha S."/>
            <person name="Miner G."/>
            <person name="Morgan M."/>
            <person name="Hawes A."/>
            <person name="Gill R."/>
            <person name="Holt R.A."/>
            <person name="Adams M.D."/>
            <person name="Amanatides P.G."/>
            <person name="Baden-Tillson H."/>
            <person name="Barnstead M."/>
            <person name="Chin S."/>
            <person name="Evans C.A."/>
            <person name="Ferriera S."/>
            <person name="Fosler C."/>
            <person name="Glodek A."/>
            <person name="Gu Z."/>
            <person name="Jennings D."/>
            <person name="Kraft C.L."/>
            <person name="Nguyen T."/>
            <person name="Pfannkoch C.M."/>
            <person name="Sitter C."/>
            <person name="Sutton G.G."/>
            <person name="Venter J.C."/>
            <person name="Woodage T."/>
            <person name="Smith D."/>
            <person name="Lee H.-M."/>
            <person name="Gustafson E."/>
            <person name="Cahill P."/>
            <person name="Kana A."/>
            <person name="Doucette-Stamm L."/>
            <person name="Weinstock K."/>
            <person name="Fechtel K."/>
            <person name="Weiss R.B."/>
            <person name="Dunn D.M."/>
            <person name="Green E.D."/>
            <person name="Blakesley R.W."/>
            <person name="Bouffard G.G."/>
            <person name="De Jong P.J."/>
            <person name="Osoegawa K."/>
            <person name="Zhu B."/>
            <person name="Marra M."/>
            <person name="Schein J."/>
            <person name="Bosdet I."/>
            <person name="Fjell C."/>
            <person name="Jones S."/>
            <person name="Krzywinski M."/>
            <person name="Mathewson C."/>
            <person name="Siddiqui A."/>
            <person name="Wye N."/>
            <person name="McPherson J."/>
            <person name="Zhao S."/>
            <person name="Fraser C.M."/>
            <person name="Shetty J."/>
            <person name="Shatsman S."/>
            <person name="Geer K."/>
            <person name="Chen Y."/>
            <person name="Abramzon S."/>
            <person name="Nierman W.C."/>
            <person name="Havlak P.H."/>
            <person name="Chen R."/>
            <person name="Durbin K.J."/>
            <person name="Egan A."/>
            <person name="Ren Y."/>
            <person name="Song X.-Z."/>
            <person name="Li B."/>
            <person name="Liu Y."/>
            <person name="Qin X."/>
            <person name="Cawley S."/>
            <person name="Cooney A.J."/>
            <person name="D'Souza L.M."/>
            <person name="Martin K."/>
            <person name="Wu J.Q."/>
            <person name="Gonzalez-Garay M.L."/>
            <person name="Jackson A.R."/>
            <person name="Kalafus K.J."/>
            <person name="McLeod M.P."/>
            <person name="Milosavljevic A."/>
            <person name="Virk D."/>
            <person name="Volkov A."/>
            <person name="Wheeler D.A."/>
            <person name="Zhang Z."/>
            <person name="Bailey J.A."/>
            <person name="Eichler E.E."/>
            <person name="Tuzun E."/>
            <person name="Birney E."/>
            <person name="Mongin E."/>
            <person name="Ureta-Vidal A."/>
            <person name="Woodwark C."/>
            <person name="Zdobnov E."/>
            <person name="Bork P."/>
            <person name="Suyama M."/>
            <person name="Torrents D."/>
            <person name="Alexandersson M."/>
            <person name="Trask B.J."/>
            <person name="Young J.M."/>
            <person name="Huang H."/>
            <person name="Wang H."/>
            <person name="Xing H."/>
            <person name="Daniels S."/>
            <person name="Gietzen D."/>
            <person name="Schmidt J."/>
            <person name="Stevens K."/>
            <person name="Vitt U."/>
            <person name="Wingrove J."/>
            <person name="Camara F."/>
            <person name="Mar Alba M."/>
            <person name="Abril J.F."/>
            <person name="Guigo R."/>
            <person name="Smit A."/>
            <person name="Dubchak I."/>
            <person name="Rubin E.M."/>
            <person name="Couronne O."/>
            <person name="Poliakov A."/>
            <person name="Huebner N."/>
            <person name="Ganten D."/>
            <person name="Goesele C."/>
            <person name="Hummel O."/>
            <person name="Kreitler T."/>
            <person name="Lee Y.-A."/>
            <person name="Monti J."/>
            <person name="Schulz H."/>
            <person name="Zimdahl H."/>
            <person name="Himmelbauer H."/>
            <person name="Lehrach H."/>
            <person name="Jacob H.J."/>
            <person name="Bromberg S."/>
            <person name="Gullings-Handley J."/>
            <person name="Jensen-Seaman M.I."/>
            <person name="Kwitek A.E."/>
            <person name="Lazar J."/>
            <person name="Pasko D."/>
            <person name="Tonellato P.J."/>
            <person name="Twigger S."/>
            <person name="Ponting C.P."/>
            <person name="Duarte J.M."/>
            <person name="Rice S."/>
            <person name="Goodstadt L."/>
            <person name="Beatson S.A."/>
            <person name="Emes R.D."/>
            <person name="Winter E.E."/>
            <person name="Webber C."/>
            <person name="Brandt P."/>
            <person name="Nyakatura G."/>
            <person name="Adetobi M."/>
            <person name="Chiaromonte F."/>
            <person name="Elnitski L."/>
            <person name="Eswara P."/>
            <person name="Hardison R.C."/>
            <person name="Hou M."/>
            <person name="Kolbe D."/>
            <person name="Makova K."/>
            <person name="Miller W."/>
            <person name="Nekrutenko A."/>
            <person name="Riemer C."/>
            <person name="Schwartz S."/>
            <person name="Taylor J."/>
            <person name="Yang S."/>
            <person name="Zhang Y."/>
            <person name="Lindpaintner K."/>
            <person name="Andrews T.D."/>
            <person name="Caccamo M."/>
            <person name="Clamp M."/>
            <person name="Clarke L."/>
            <person name="Curwen V."/>
            <person name="Durbin R.M."/>
            <person name="Eyras E."/>
            <person name="Searle S.M."/>
            <person name="Cooper G.M."/>
            <person name="Batzoglou S."/>
            <person name="Brudno M."/>
            <person name="Sidow A."/>
            <person name="Stone E.A."/>
            <person name="Payseur B.A."/>
            <person name="Bourque G."/>
            <person name="Lopez-Otin C."/>
            <person name="Puente X.S."/>
            <person name="Chakrabarti K."/>
            <person name="Chatterji S."/>
            <person name="Dewey C."/>
            <person name="Pachter L."/>
            <person name="Bray N."/>
            <person name="Yap V.B."/>
            <person name="Caspi A."/>
            <person name="Tesler G."/>
            <person name="Pevzner P.A."/>
            <person name="Haussler D."/>
            <person name="Roskin K.M."/>
            <person name="Baertsch R."/>
            <person name="Clawson H."/>
            <person name="Furey T.S."/>
            <person name="Hinrichs A.S."/>
            <person name="Karolchik D."/>
            <person name="Kent W.J."/>
            <person name="Rosenbloom K.R."/>
            <person name="Trumbower H."/>
            <person name="Weirauch M."/>
            <person name="Cooper D.N."/>
            <person name="Stenson P.D."/>
            <person name="Ma B."/>
            <person name="Brent M."/>
            <person name="Arumugam M."/>
            <person name="Shteynberg D."/>
            <person name="Copley R.R."/>
            <person name="Taylor M.S."/>
            <person name="Riethman H."/>
            <person name="Mudunuri U."/>
            <person name="Peterson J."/>
            <person name="Guyer M."/>
            <person name="Felsenfeld A."/>
            <person name="Old S."/>
            <person name="Mockrin S."/>
            <person name="Collins F.S."/>
        </authorList>
    </citation>
    <scope>NUCLEOTIDE SEQUENCE [LARGE SCALE GENOMIC DNA]</scope>
    <source>
        <strain>Brown Norway</strain>
    </source>
</reference>
<reference key="2">
    <citation type="submission" date="2005-07" db="EMBL/GenBank/DDBJ databases">
        <authorList>
            <person name="Mural R.J."/>
            <person name="Adams M.D."/>
            <person name="Myers E.W."/>
            <person name="Smith H.O."/>
            <person name="Venter J.C."/>
        </authorList>
    </citation>
    <scope>NUCLEOTIDE SEQUENCE [LARGE SCALE GENOMIC DNA]</scope>
</reference>
<reference key="3">
    <citation type="journal article" date="2010" name="Biochem. Biophys. Res. Commun.">
        <title>SID1 transmembrane family, member 2 (Sidt2): A novel lysosomal membrane protein.</title>
        <authorList>
            <person name="Jialin G."/>
            <person name="Xuefan G."/>
            <person name="Huiwen Z."/>
        </authorList>
    </citation>
    <scope>GLYCOSYLATION</scope>
    <scope>TISSUE SPECIFICITY</scope>
</reference>
<reference key="4">
    <citation type="journal article" date="2012" name="Nat. Commun.">
        <title>Quantitative maps of protein phosphorylation sites across 14 different rat organs and tissues.</title>
        <authorList>
            <person name="Lundby A."/>
            <person name="Secher A."/>
            <person name="Lage K."/>
            <person name="Nordsborg N.B."/>
            <person name="Dmytriyev A."/>
            <person name="Lundby C."/>
            <person name="Olsen J.V."/>
        </authorList>
    </citation>
    <scope>IDENTIFICATION BY MASS SPECTROMETRY [LARGE SCALE ANALYSIS]</scope>
</reference>
<organism>
    <name type="scientific">Rattus norvegicus</name>
    <name type="common">Rat</name>
    <dbReference type="NCBI Taxonomy" id="10116"/>
    <lineage>
        <taxon>Eukaryota</taxon>
        <taxon>Metazoa</taxon>
        <taxon>Chordata</taxon>
        <taxon>Craniata</taxon>
        <taxon>Vertebrata</taxon>
        <taxon>Euteleostomi</taxon>
        <taxon>Mammalia</taxon>
        <taxon>Eutheria</taxon>
        <taxon>Euarchontoglires</taxon>
        <taxon>Glires</taxon>
        <taxon>Rodentia</taxon>
        <taxon>Myomorpha</taxon>
        <taxon>Muroidea</taxon>
        <taxon>Muridae</taxon>
        <taxon>Murinae</taxon>
        <taxon>Rattus</taxon>
    </lineage>
</organism>